<reference key="1">
    <citation type="book" date="1987" name="Biochemistry of Vitamin B6">
        <title>Alpha-amino-epsilon-caprolactam racemase for L-lysine production.</title>
        <editorList>
            <person name="Korpela T."/>
            <person name="Christen P."/>
        </editorList>
        <authorList>
            <person name="Naoko N."/>
            <person name="Oshihara W."/>
            <person name="Yanai A."/>
        </authorList>
    </citation>
    <scope>NUCLEOTIDE SEQUENCE [GENOMIC DNA]</scope>
</reference>
<reference key="2">
    <citation type="journal article" date="1986" name="Biochemistry">
        <title>Mechanism of alpha-amino-epsilon-caprolactam racemase reaction.</title>
        <authorList>
            <person name="Ahmed S.A."/>
            <person name="Esaki N."/>
            <person name="Tanaka H."/>
            <person name="Soda K."/>
        </authorList>
    </citation>
    <scope>CATALYTIC ACTIVITY</scope>
</reference>
<reference key="3">
    <citation type="journal article" date="2014" name="PLoS ONE">
        <title>Finding sequences for over 270 orphan enzymes.</title>
        <authorList>
            <person name="Shearer A.G."/>
            <person name="Altman T."/>
            <person name="Rhee C.D."/>
        </authorList>
    </citation>
    <scope>IDENTIFICATION</scope>
</reference>
<reference key="4">
    <citation type="journal article" date="2009" name="Biochemistry">
        <title>The novel structure of a pyridoxal 5'-phosphate-dependent fold-type I racemase, alpha-amino-epsilon-caprolactam racemase from Achromobacter obae.</title>
        <authorList>
            <person name="Okazaki S."/>
            <person name="Suzuki A."/>
            <person name="Mizushima T."/>
            <person name="Kawano T."/>
            <person name="Komeda H."/>
            <person name="Asano Y."/>
            <person name="Yamane T."/>
        </authorList>
    </citation>
    <scope>X-RAY CRYSTALLOGRAPHY (2.21 ANGSTROMS) IN COMPLEX WITH PYRIDOXAL PHOSPHATE AND EPSILON-CAPROLACTAM</scope>
    <scope>PYRIDOXAL PHOSPHATE AT LYS-267</scope>
    <scope>ACTIVE SITE</scope>
    <scope>FUNCTION</scope>
    <scope>SUBUNIT</scope>
</reference>
<dbReference type="EC" id="5.1.1.15"/>
<dbReference type="PIR" id="JC1497">
    <property type="entry name" value="JC1497"/>
</dbReference>
<dbReference type="PDB" id="2ZUK">
    <property type="method" value="X-ray"/>
    <property type="resolution" value="2.41 A"/>
    <property type="chains" value="A/B=1-436"/>
</dbReference>
<dbReference type="PDB" id="3DXV">
    <property type="method" value="X-ray"/>
    <property type="resolution" value="2.21 A"/>
    <property type="chains" value="A/B=1-436"/>
</dbReference>
<dbReference type="PDB" id="3DXW">
    <property type="method" value="X-ray"/>
    <property type="resolution" value="2.41 A"/>
    <property type="chains" value="A/B=1-436"/>
</dbReference>
<dbReference type="PDBsum" id="2ZUK"/>
<dbReference type="PDBsum" id="3DXV"/>
<dbReference type="PDBsum" id="3DXW"/>
<dbReference type="SMR" id="Q7M181"/>
<dbReference type="BRENDA" id="5.1.1.10">
    <property type="organism ID" value="76"/>
</dbReference>
<dbReference type="BRENDA" id="5.1.1.15">
    <property type="organism ID" value="76"/>
</dbReference>
<dbReference type="EvolutionaryTrace" id="Q7M181"/>
<dbReference type="GO" id="GO:0047463">
    <property type="term" value="F:2-aminohexano-6-lactam racemase activity"/>
    <property type="evidence" value="ECO:0007669"/>
    <property type="project" value="UniProtKB-EC"/>
</dbReference>
<dbReference type="GO" id="GO:0030170">
    <property type="term" value="F:pyridoxal phosphate binding"/>
    <property type="evidence" value="ECO:0007669"/>
    <property type="project" value="InterPro"/>
</dbReference>
<dbReference type="GO" id="GO:0008483">
    <property type="term" value="F:transaminase activity"/>
    <property type="evidence" value="ECO:0007669"/>
    <property type="project" value="InterPro"/>
</dbReference>
<dbReference type="CDD" id="cd00610">
    <property type="entry name" value="OAT_like"/>
    <property type="match status" value="1"/>
</dbReference>
<dbReference type="Gene3D" id="3.90.1150.10">
    <property type="entry name" value="Aspartate Aminotransferase, domain 1"/>
    <property type="match status" value="1"/>
</dbReference>
<dbReference type="Gene3D" id="3.40.640.10">
    <property type="entry name" value="Type I PLP-dependent aspartate aminotransferase-like (Major domain)"/>
    <property type="match status" value="1"/>
</dbReference>
<dbReference type="InterPro" id="IPR005814">
    <property type="entry name" value="Aminotrans_3"/>
</dbReference>
<dbReference type="InterPro" id="IPR049704">
    <property type="entry name" value="Aminotrans_3_PPA_site"/>
</dbReference>
<dbReference type="InterPro" id="IPR015424">
    <property type="entry name" value="PyrdxlP-dep_Trfase"/>
</dbReference>
<dbReference type="InterPro" id="IPR015421">
    <property type="entry name" value="PyrdxlP-dep_Trfase_major"/>
</dbReference>
<dbReference type="InterPro" id="IPR015422">
    <property type="entry name" value="PyrdxlP-dep_Trfase_small"/>
</dbReference>
<dbReference type="PANTHER" id="PTHR45688">
    <property type="match status" value="1"/>
</dbReference>
<dbReference type="PANTHER" id="PTHR45688:SF13">
    <property type="entry name" value="ALANINE--GLYOXYLATE AMINOTRANSFERASE 2-LIKE"/>
    <property type="match status" value="1"/>
</dbReference>
<dbReference type="Pfam" id="PF00202">
    <property type="entry name" value="Aminotran_3"/>
    <property type="match status" value="1"/>
</dbReference>
<dbReference type="PIRSF" id="PIRSF000521">
    <property type="entry name" value="Transaminase_4ab_Lys_Orn"/>
    <property type="match status" value="1"/>
</dbReference>
<dbReference type="SUPFAM" id="SSF53383">
    <property type="entry name" value="PLP-dependent transferases"/>
    <property type="match status" value="1"/>
</dbReference>
<dbReference type="PROSITE" id="PS00600">
    <property type="entry name" value="AA_TRANSFER_CLASS_3"/>
    <property type="match status" value="1"/>
</dbReference>
<evidence type="ECO:0000250" key="1"/>
<evidence type="ECO:0000269" key="2">
    <source>
    </source>
</evidence>
<evidence type="ECO:0000269" key="3">
    <source>
    </source>
</evidence>
<evidence type="ECO:0000305" key="4"/>
<evidence type="ECO:0000305" key="5">
    <source>
    </source>
</evidence>
<evidence type="ECO:0007829" key="6">
    <source>
        <dbReference type="PDB" id="3DXV"/>
    </source>
</evidence>
<comment type="function">
    <text evidence="2">catalyzes the interconversion of L-alpha-amino-epsilon-caprolactam and D-alpha-amino-epsilon-caprolactam.</text>
</comment>
<comment type="catalytic activity">
    <reaction evidence="3">
        <text>L-2-aminohexano-6-lactam = D-2-aminohexano-6-lactam</text>
        <dbReference type="Rhea" id="RHEA:14813"/>
        <dbReference type="ChEBI" id="CHEBI:58113"/>
        <dbReference type="ChEBI" id="CHEBI:58609"/>
        <dbReference type="EC" id="5.1.1.15"/>
    </reaction>
</comment>
<comment type="cofactor">
    <cofactor evidence="4">
        <name>pyridoxal 5'-phosphate</name>
        <dbReference type="ChEBI" id="CHEBI:597326"/>
    </cofactor>
</comment>
<comment type="subunit">
    <text evidence="2">Monomer.</text>
</comment>
<comment type="similarity">
    <text evidence="4">Belongs to the class-III pyridoxal-phosphate-dependent aminotransferase family.</text>
</comment>
<keyword id="KW-0002">3D-structure</keyword>
<keyword id="KW-0413">Isomerase</keyword>
<keyword id="KW-0663">Pyridoxal phosphate</keyword>
<feature type="chain" id="PRO_0000430444" description="2-aminohexano-6-lactam racemase">
    <location>
        <begin position="1"/>
        <end position="436"/>
    </location>
</feature>
<feature type="active site" evidence="5">
    <location>
        <position position="137"/>
    </location>
</feature>
<feature type="binding site">
    <location>
        <begin position="110"/>
        <end position="111"/>
    </location>
    <ligand>
        <name>pyridoxal 5'-phosphate</name>
        <dbReference type="ChEBI" id="CHEBI:597326"/>
    </ligand>
</feature>
<feature type="binding site" evidence="1">
    <location>
        <position position="137"/>
    </location>
    <ligand>
        <name>pyridoxal 5'-phosphate</name>
        <dbReference type="ChEBI" id="CHEBI:597326"/>
    </ligand>
</feature>
<feature type="binding site" evidence="1">
    <location>
        <begin position="238"/>
        <end position="241"/>
    </location>
    <ligand>
        <name>pyridoxal 5'-phosphate</name>
        <dbReference type="ChEBI" id="CHEBI:597326"/>
    </ligand>
</feature>
<feature type="binding site" evidence="2">
    <location>
        <position position="295"/>
    </location>
    <ligand>
        <name>pyridoxal 5'-phosphate</name>
        <dbReference type="ChEBI" id="CHEBI:597326"/>
    </ligand>
</feature>
<feature type="modified residue" description="N6-(pyridoxal phosphate)lysine">
    <location>
        <position position="267"/>
    </location>
</feature>
<feature type="helix" evidence="6">
    <location>
        <begin position="5"/>
        <end position="12"/>
    </location>
</feature>
<feature type="helix" evidence="6">
    <location>
        <begin position="15"/>
        <end position="17"/>
    </location>
</feature>
<feature type="strand" evidence="6">
    <location>
        <begin position="25"/>
        <end position="31"/>
    </location>
</feature>
<feature type="strand" evidence="6">
    <location>
        <begin position="33"/>
        <end position="36"/>
    </location>
</feature>
<feature type="strand" evidence="6">
    <location>
        <begin position="41"/>
        <end position="46"/>
    </location>
</feature>
<feature type="turn" evidence="6">
    <location>
        <begin position="47"/>
        <end position="51"/>
    </location>
</feature>
<feature type="helix" evidence="6">
    <location>
        <begin position="59"/>
        <end position="70"/>
    </location>
</feature>
<feature type="strand" evidence="6">
    <location>
        <begin position="77"/>
        <end position="82"/>
    </location>
</feature>
<feature type="helix" evidence="6">
    <location>
        <begin position="83"/>
        <end position="94"/>
    </location>
</feature>
<feature type="turn" evidence="6">
    <location>
        <begin position="95"/>
        <end position="97"/>
    </location>
</feature>
<feature type="turn" evidence="6">
    <location>
        <begin position="99"/>
        <end position="101"/>
    </location>
</feature>
<feature type="strand" evidence="6">
    <location>
        <begin position="102"/>
        <end position="109"/>
    </location>
</feature>
<feature type="helix" evidence="6">
    <location>
        <begin position="110"/>
        <end position="125"/>
    </location>
</feature>
<feature type="strand" evidence="6">
    <location>
        <begin position="129"/>
        <end position="133"/>
    </location>
</feature>
<feature type="helix" evidence="6">
    <location>
        <begin position="142"/>
        <end position="145"/>
    </location>
</feature>
<feature type="strand" evidence="6">
    <location>
        <begin position="150"/>
        <end position="153"/>
    </location>
</feature>
<feature type="strand" evidence="6">
    <location>
        <begin position="162"/>
        <end position="165"/>
    </location>
</feature>
<feature type="strand" evidence="6">
    <location>
        <begin position="170"/>
        <end position="172"/>
    </location>
</feature>
<feature type="helix" evidence="6">
    <location>
        <begin position="181"/>
        <end position="192"/>
    </location>
</feature>
<feature type="strand" evidence="6">
    <location>
        <begin position="199"/>
        <end position="204"/>
    </location>
</feature>
<feature type="strand" evidence="6">
    <location>
        <begin position="206"/>
        <end position="209"/>
    </location>
</feature>
<feature type="turn" evidence="6">
    <location>
        <begin position="210"/>
        <end position="212"/>
    </location>
</feature>
<feature type="helix" evidence="6">
    <location>
        <begin position="220"/>
        <end position="230"/>
    </location>
</feature>
<feature type="strand" evidence="6">
    <location>
        <begin position="234"/>
        <end position="238"/>
    </location>
</feature>
<feature type="turn" evidence="6">
    <location>
        <begin position="240"/>
        <end position="242"/>
    </location>
</feature>
<feature type="turn" evidence="6">
    <location>
        <begin position="244"/>
        <end position="247"/>
    </location>
</feature>
<feature type="strand" evidence="6">
    <location>
        <begin position="248"/>
        <end position="251"/>
    </location>
</feature>
<feature type="helix" evidence="6">
    <location>
        <begin position="252"/>
        <end position="255"/>
    </location>
</feature>
<feature type="strand" evidence="6">
    <location>
        <begin position="261"/>
        <end position="265"/>
    </location>
</feature>
<feature type="helix" evidence="6">
    <location>
        <begin position="267"/>
        <end position="270"/>
    </location>
</feature>
<feature type="strand" evidence="6">
    <location>
        <begin position="276"/>
        <end position="281"/>
    </location>
</feature>
<feature type="helix" evidence="6">
    <location>
        <begin position="282"/>
        <end position="285"/>
    </location>
</feature>
<feature type="strand" evidence="6">
    <location>
        <begin position="289"/>
        <end position="292"/>
    </location>
</feature>
<feature type="turn" evidence="6">
    <location>
        <begin position="295"/>
        <end position="298"/>
    </location>
</feature>
<feature type="helix" evidence="6">
    <location>
        <begin position="300"/>
        <end position="315"/>
    </location>
</feature>
<feature type="helix" evidence="6">
    <location>
        <begin position="318"/>
        <end position="339"/>
    </location>
</feature>
<feature type="strand" evidence="6">
    <location>
        <begin position="343"/>
        <end position="349"/>
    </location>
</feature>
<feature type="strand" evidence="6">
    <location>
        <begin position="352"/>
        <end position="360"/>
    </location>
</feature>
<feature type="turn" evidence="6">
    <location>
        <begin position="361"/>
        <end position="364"/>
    </location>
</feature>
<feature type="helix" evidence="6">
    <location>
        <begin position="368"/>
        <end position="381"/>
    </location>
</feature>
<feature type="strand" evidence="6">
    <location>
        <begin position="386"/>
        <end position="389"/>
    </location>
</feature>
<feature type="strand" evidence="6">
    <location>
        <begin position="394"/>
        <end position="397"/>
    </location>
</feature>
<feature type="helix" evidence="6">
    <location>
        <begin position="405"/>
        <end position="420"/>
    </location>
</feature>
<feature type="helix" evidence="6">
    <location>
        <begin position="421"/>
        <end position="424"/>
    </location>
</feature>
<feature type="helix" evidence="6">
    <location>
        <begin position="427"/>
        <end position="431"/>
    </location>
</feature>
<proteinExistence type="evidence at protein level"/>
<organism>
    <name type="scientific">Achromobacter obae</name>
    <dbReference type="NCBI Taxonomy" id="37486"/>
    <lineage>
        <taxon>Bacteria</taxon>
        <taxon>Pseudomonadati</taxon>
        <taxon>Pseudomonadota</taxon>
        <taxon>Betaproteobacteria</taxon>
        <taxon>Burkholderiales</taxon>
        <taxon>Alcaligenaceae</taxon>
        <taxon>Achromobacter</taxon>
    </lineage>
</organism>
<protein>
    <recommendedName>
        <fullName>2-aminohexano-6-lactam racemase</fullName>
        <ecNumber>5.1.1.15</ecNumber>
    </recommendedName>
    <alternativeName>
        <fullName>2-amino-hexano-6-lactam racemase</fullName>
    </alternativeName>
    <alternativeName>
        <fullName>Alpha-amino-epsilon-caprolactam racemase</fullName>
    </alternativeName>
</protein>
<sequence>MTKALYDRDGAAIGNLQKLRFFPLAISGGRGARLIEENGRELIDLSGAWGAASLGYGHPAIVAAVSAAAANPAGATILSASNAPAVTLAERLLASFPGEGTHKIWFGHSGSDANEAAYRAIVKATGRSGVIAFAGAYHGCTVGSMAFSGHSVQADAAKADGLILLPYPDPYRPYRNDPTGDAILTLLTEKLAAVPAGSIGAAFIEPIQSDGGLIVPPDGFLRKFADICRAHGILVVCDEVKVGLARSGRLHCFEHEGFVPDILVLGKGLGGGLPLSAVIAPAEILDCASAFAMQTLHGNPISAAAGLAVLETIDRDDLPAMAERKGRLLRDGLSELAKRHPLIGDIRGRGLACGMELVCDRQSREPARAETAKLIYRAYQLGLVVYYVGMNGNVLEFTPPLTITETDIHKALDLLDRAFSELSAVSNEEIAQFAGW</sequence>
<name>ACLR_ACHOB</name>
<accession>Q7M181</accession>